<organism>
    <name type="scientific">Aspergillus fumigatus (strain ATCC MYA-4609 / CBS 101355 / FGSC A1100 / Af293)</name>
    <name type="common">Neosartorya fumigata</name>
    <dbReference type="NCBI Taxonomy" id="330879"/>
    <lineage>
        <taxon>Eukaryota</taxon>
        <taxon>Fungi</taxon>
        <taxon>Dikarya</taxon>
        <taxon>Ascomycota</taxon>
        <taxon>Pezizomycotina</taxon>
        <taxon>Eurotiomycetes</taxon>
        <taxon>Eurotiomycetidae</taxon>
        <taxon>Eurotiales</taxon>
        <taxon>Aspergillaceae</taxon>
        <taxon>Aspergillus</taxon>
        <taxon>Aspergillus subgen. Fumigati</taxon>
    </lineage>
</organism>
<sequence length="493" mass="53840">MHLPSLSVALALVSSSLALPQAVLPENDVSSRAAAVKEAFSHAWDGYMKYAFPHDELLPVSNSYGDSRNGWGASAVDALSTAIVMRNATIVSQILDHIAKIDYSKTSDMVSLFETTIRYLGGMLSGYDLLKGPAADLVEDRTKVDMLLQQSKNLGDVLKFAFDTPSGVPYNNINITSHGNDGATTNGLAVTGTLVLEWTRLSDLTGDQEYAKLSQRAESYLLAPQPSSGEPFPGLVGSAISIQTGQFTNGFVSWNGGSDSFYEYLMKMYVYDPKRFATYKDRWVAAAESSIDHLASNPASRPDLTFLATYNKGSLGLSSQHLACFDGGSYLLGGTVLDRADLIDFGLKLVDGCAETYHQTLTGIGPESFGWDEKSVPADQKELYERAGFYVQSGAYILRPEVIESFYYAYRVTGKKQYRDWVWNAFENINKYCRTESGFAGLTNVNAVNGGGRYDNQESFLFAEVMKYAYLTHAPGMSSMPAAAEDKANKSRG</sequence>
<reference key="1">
    <citation type="journal article" date="2005" name="Nature">
        <title>Genomic sequence of the pathogenic and allergenic filamentous fungus Aspergillus fumigatus.</title>
        <authorList>
            <person name="Nierman W.C."/>
            <person name="Pain A."/>
            <person name="Anderson M.J."/>
            <person name="Wortman J.R."/>
            <person name="Kim H.S."/>
            <person name="Arroyo J."/>
            <person name="Berriman M."/>
            <person name="Abe K."/>
            <person name="Archer D.B."/>
            <person name="Bermejo C."/>
            <person name="Bennett J.W."/>
            <person name="Bowyer P."/>
            <person name="Chen D."/>
            <person name="Collins M."/>
            <person name="Coulsen R."/>
            <person name="Davies R."/>
            <person name="Dyer P.S."/>
            <person name="Farman M.L."/>
            <person name="Fedorova N."/>
            <person name="Fedorova N.D."/>
            <person name="Feldblyum T.V."/>
            <person name="Fischer R."/>
            <person name="Fosker N."/>
            <person name="Fraser A."/>
            <person name="Garcia J.L."/>
            <person name="Garcia M.J."/>
            <person name="Goble A."/>
            <person name="Goldman G.H."/>
            <person name="Gomi K."/>
            <person name="Griffith-Jones S."/>
            <person name="Gwilliam R."/>
            <person name="Haas B.J."/>
            <person name="Haas H."/>
            <person name="Harris D.E."/>
            <person name="Horiuchi H."/>
            <person name="Huang J."/>
            <person name="Humphray S."/>
            <person name="Jimenez J."/>
            <person name="Keller N."/>
            <person name="Khouri H."/>
            <person name="Kitamoto K."/>
            <person name="Kobayashi T."/>
            <person name="Konzack S."/>
            <person name="Kulkarni R."/>
            <person name="Kumagai T."/>
            <person name="Lafton A."/>
            <person name="Latge J.-P."/>
            <person name="Li W."/>
            <person name="Lord A."/>
            <person name="Lu C."/>
            <person name="Majoros W.H."/>
            <person name="May G.S."/>
            <person name="Miller B.L."/>
            <person name="Mohamoud Y."/>
            <person name="Molina M."/>
            <person name="Monod M."/>
            <person name="Mouyna I."/>
            <person name="Mulligan S."/>
            <person name="Murphy L.D."/>
            <person name="O'Neil S."/>
            <person name="Paulsen I."/>
            <person name="Penalva M.A."/>
            <person name="Pertea M."/>
            <person name="Price C."/>
            <person name="Pritchard B.L."/>
            <person name="Quail M.A."/>
            <person name="Rabbinowitsch E."/>
            <person name="Rawlins N."/>
            <person name="Rajandream M.A."/>
            <person name="Reichard U."/>
            <person name="Renauld H."/>
            <person name="Robson G.D."/>
            <person name="Rodriguez de Cordoba S."/>
            <person name="Rodriguez-Pena J.M."/>
            <person name="Ronning C.M."/>
            <person name="Rutter S."/>
            <person name="Salzberg S.L."/>
            <person name="Sanchez M."/>
            <person name="Sanchez-Ferrero J.C."/>
            <person name="Saunders D."/>
            <person name="Seeger K."/>
            <person name="Squares R."/>
            <person name="Squares S."/>
            <person name="Takeuchi M."/>
            <person name="Tekaia F."/>
            <person name="Turner G."/>
            <person name="Vazquez de Aldana C.R."/>
            <person name="Weidman J."/>
            <person name="White O."/>
            <person name="Woodward J.R."/>
            <person name="Yu J.-H."/>
            <person name="Fraser C.M."/>
            <person name="Galagan J.E."/>
            <person name="Asai K."/>
            <person name="Machida M."/>
            <person name="Hall N."/>
            <person name="Barrell B.G."/>
            <person name="Denning D.W."/>
        </authorList>
    </citation>
    <scope>NUCLEOTIDE SEQUENCE [LARGE SCALE GENOMIC DNA]</scope>
    <source>
        <strain>ATCC MYA-4609 / CBS 101355 / FGSC A1100 / Af293</strain>
    </source>
</reference>
<accession>Q4WRZ5</accession>
<proteinExistence type="inferred from homology"/>
<name>MNS1B_ASPFU</name>
<dbReference type="EC" id="3.2.1.113" evidence="3"/>
<dbReference type="EMBL" id="AAHF01000004">
    <property type="protein sequence ID" value="EAL90787.1"/>
    <property type="molecule type" value="Genomic_DNA"/>
</dbReference>
<dbReference type="RefSeq" id="XP_752825.1">
    <property type="nucleotide sequence ID" value="XM_747732.1"/>
</dbReference>
<dbReference type="SMR" id="Q4WRZ5"/>
<dbReference type="FunCoup" id="Q4WRZ5">
    <property type="interactions" value="101"/>
</dbReference>
<dbReference type="STRING" id="330879.Q4WRZ5"/>
<dbReference type="Allergome" id="8990">
    <property type="allergen name" value="Asp f Mannosidase"/>
</dbReference>
<dbReference type="GlyCosmos" id="Q4WRZ5">
    <property type="glycosylation" value="3 sites, No reported glycans"/>
</dbReference>
<dbReference type="EnsemblFungi" id="EAL90787">
    <property type="protein sequence ID" value="EAL90787"/>
    <property type="gene ID" value="AFUA_1G14560"/>
</dbReference>
<dbReference type="GeneID" id="3509847"/>
<dbReference type="KEGG" id="afm:AFUA_1G14560"/>
<dbReference type="eggNOG" id="KOG2204">
    <property type="taxonomic scope" value="Eukaryota"/>
</dbReference>
<dbReference type="HOGENOM" id="CLU_003818_0_2_1"/>
<dbReference type="InParanoid" id="Q4WRZ5"/>
<dbReference type="OMA" id="PESFGWD"/>
<dbReference type="OrthoDB" id="8118055at2759"/>
<dbReference type="UniPathway" id="UPA00378"/>
<dbReference type="Proteomes" id="UP000002530">
    <property type="component" value="Chromosome 1"/>
</dbReference>
<dbReference type="GO" id="GO:0060205">
    <property type="term" value="C:cytoplasmic vesicle lumen"/>
    <property type="evidence" value="ECO:0007669"/>
    <property type="project" value="UniProtKB-SubCell"/>
</dbReference>
<dbReference type="GO" id="GO:0005783">
    <property type="term" value="C:endoplasmic reticulum"/>
    <property type="evidence" value="ECO:0000318"/>
    <property type="project" value="GO_Central"/>
</dbReference>
<dbReference type="GO" id="GO:0016020">
    <property type="term" value="C:membrane"/>
    <property type="evidence" value="ECO:0000318"/>
    <property type="project" value="GO_Central"/>
</dbReference>
<dbReference type="GO" id="GO:0005509">
    <property type="term" value="F:calcium ion binding"/>
    <property type="evidence" value="ECO:0007669"/>
    <property type="project" value="InterPro"/>
</dbReference>
<dbReference type="GO" id="GO:0004571">
    <property type="term" value="F:mannosyl-oligosaccharide 1,2-alpha-mannosidase activity"/>
    <property type="evidence" value="ECO:0000318"/>
    <property type="project" value="GO_Central"/>
</dbReference>
<dbReference type="GO" id="GO:0005975">
    <property type="term" value="P:carbohydrate metabolic process"/>
    <property type="evidence" value="ECO:0007669"/>
    <property type="project" value="InterPro"/>
</dbReference>
<dbReference type="GO" id="GO:0036503">
    <property type="term" value="P:ERAD pathway"/>
    <property type="evidence" value="ECO:0000318"/>
    <property type="project" value="GO_Central"/>
</dbReference>
<dbReference type="GO" id="GO:0006486">
    <property type="term" value="P:protein glycosylation"/>
    <property type="evidence" value="ECO:0007669"/>
    <property type="project" value="UniProtKB-UniPathway"/>
</dbReference>
<dbReference type="FunFam" id="1.50.10.10:FF:000047">
    <property type="entry name" value="Mannosyl-oligosaccharide alpha-1,2-mannosidase"/>
    <property type="match status" value="1"/>
</dbReference>
<dbReference type="Gene3D" id="1.50.10.10">
    <property type="match status" value="1"/>
</dbReference>
<dbReference type="InterPro" id="IPR012341">
    <property type="entry name" value="6hp_glycosidase-like_sf"/>
</dbReference>
<dbReference type="InterPro" id="IPR001382">
    <property type="entry name" value="Glyco_hydro_47"/>
</dbReference>
<dbReference type="InterPro" id="IPR050749">
    <property type="entry name" value="Glycosyl_Hydrolase_47"/>
</dbReference>
<dbReference type="InterPro" id="IPR036026">
    <property type="entry name" value="Seven-hairpin_glycosidases"/>
</dbReference>
<dbReference type="PANTHER" id="PTHR11742:SF101">
    <property type="entry name" value="MANNOSYL-OLIGOSACCHARIDE ALPHA-1,2-MANNOSIDASE 1B"/>
    <property type="match status" value="1"/>
</dbReference>
<dbReference type="PANTHER" id="PTHR11742">
    <property type="entry name" value="MANNOSYL-OLIGOSACCHARIDE ALPHA-1,2-MANNOSIDASE-RELATED"/>
    <property type="match status" value="1"/>
</dbReference>
<dbReference type="Pfam" id="PF01532">
    <property type="entry name" value="Glyco_hydro_47"/>
    <property type="match status" value="1"/>
</dbReference>
<dbReference type="PRINTS" id="PR00747">
    <property type="entry name" value="GLYHDRLASE47"/>
</dbReference>
<dbReference type="SUPFAM" id="SSF48225">
    <property type="entry name" value="Seven-hairpin glycosidases"/>
    <property type="match status" value="1"/>
</dbReference>
<keyword id="KW-0119">Carbohydrate metabolism</keyword>
<keyword id="KW-0968">Cytoplasmic vesicle</keyword>
<keyword id="KW-1015">Disulfide bond</keyword>
<keyword id="KW-0325">Glycoprotein</keyword>
<keyword id="KW-0326">Glycosidase</keyword>
<keyword id="KW-0378">Hydrolase</keyword>
<keyword id="KW-1185">Reference proteome</keyword>
<keyword id="KW-0732">Signal</keyword>
<gene>
    <name type="primary">mns1B</name>
    <name type="synonym">msdS</name>
    <name type="ORF">AFUA_1G14560</name>
</gene>
<comment type="function">
    <text evidence="1">Involved in the maturation of Asn-linked oligosaccharides. Progressively trims alpha-1,2-linked mannose residues from Man(9)GlcNAc(2) to produce Man(5)GlcNAc(2) (By similarity).</text>
</comment>
<comment type="catalytic activity">
    <reaction evidence="3">
        <text>N(4)-(alpha-D-Man-(1-&gt;2)-alpha-D-Man-(1-&gt;2)-alpha-D-Man-(1-&gt;3)-[alpha-D-Man-(1-&gt;2)-alpha-D-Man-(1-&gt;3)-[alpha-D-Man-(1-&gt;2)-alpha-D-Man-(1-&gt;6)]-alpha-D-Man-(1-&gt;6)]-beta-D-Man-(1-&gt;4)-beta-D-GlcNAc-(1-&gt;4)-beta-D-GlcNAc)-L-asparaginyl-[protein] (N-glucan mannose isomer 9A1,2,3B1,2,3) + 4 H2O = N(4)-(alpha-D-Man-(1-&gt;3)-[alpha-D-Man-(1-&gt;3)-[alpha-D-Man-(1-&gt;6)]-alpha-D-Man-(1-&gt;6)]-beta-D-Man-(1-&gt;4)-beta-D-GlcNAc-(1-&gt;4)-beta-D-GlcNAc)-L-asparaginyl-[protein] (N-glucan mannose isomer 5A1,2) + 4 beta-D-mannose</text>
        <dbReference type="Rhea" id="RHEA:56008"/>
        <dbReference type="Rhea" id="RHEA-COMP:14356"/>
        <dbReference type="Rhea" id="RHEA-COMP:14367"/>
        <dbReference type="ChEBI" id="CHEBI:15377"/>
        <dbReference type="ChEBI" id="CHEBI:28563"/>
        <dbReference type="ChEBI" id="CHEBI:59087"/>
        <dbReference type="ChEBI" id="CHEBI:139493"/>
        <dbReference type="EC" id="3.2.1.113"/>
    </reaction>
</comment>
<comment type="catalytic activity">
    <reaction evidence="3">
        <text>N(4)-(alpha-D-Man-(1-&gt;2)-alpha-D-Man-(1-&gt;2)-alpha-D-Man-(1-&gt;3)-[alpha-D-Man-(1-&gt;3)-[alpha-D-Man-(1-&gt;2)-alpha-D-Man-(1-&gt;6)]-alpha-D-Man-(1-&gt;6)]-beta-D-Man-(1-&gt;4)-beta-D-GlcNAc-(1-&gt;4)-beta-D-GlcNAc)-L-asparaginyl-[protein] (N-glucan mannose isomer 8A1,2,3B1,3) + 3 H2O = N(4)-(alpha-D-Man-(1-&gt;3)-[alpha-D-Man-(1-&gt;3)-[alpha-D-Man-(1-&gt;6)]-alpha-D-Man-(1-&gt;6)]-beta-D-Man-(1-&gt;4)-beta-D-GlcNAc-(1-&gt;4)-beta-D-GlcNAc)-L-asparaginyl-[protein] (N-glucan mannose isomer 5A1,2) + 3 beta-D-mannose</text>
        <dbReference type="Rhea" id="RHEA:56028"/>
        <dbReference type="Rhea" id="RHEA-COMP:14358"/>
        <dbReference type="Rhea" id="RHEA-COMP:14367"/>
        <dbReference type="ChEBI" id="CHEBI:15377"/>
        <dbReference type="ChEBI" id="CHEBI:28563"/>
        <dbReference type="ChEBI" id="CHEBI:59087"/>
        <dbReference type="ChEBI" id="CHEBI:60628"/>
        <dbReference type="EC" id="3.2.1.113"/>
    </reaction>
</comment>
<comment type="cofactor">
    <cofactor evidence="4">
        <name>Ca(2+)</name>
        <dbReference type="ChEBI" id="CHEBI:29108"/>
    </cofactor>
    <cofactor evidence="4">
        <name>Mg(2+)</name>
        <dbReference type="ChEBI" id="CHEBI:18420"/>
    </cofactor>
    <text evidence="4">Ca(2+). Can also use Mg(2+), but with lower efficiency.</text>
</comment>
<comment type="pathway">
    <text evidence="3">Protein modification; protein glycosylation.</text>
</comment>
<comment type="subunit">
    <text evidence="1">Monomer.</text>
</comment>
<comment type="subcellular location">
    <subcellularLocation>
        <location evidence="1">Cytoplasmic vesicle lumen</location>
    </subcellularLocation>
</comment>
<comment type="similarity">
    <text evidence="6">Belongs to the glycosyl hydrolase 47 family.</text>
</comment>
<protein>
    <recommendedName>
        <fullName>Probable mannosyl-oligosaccharide alpha-1,2-mannosidase 1B</fullName>
        <ecNumber evidence="3">3.2.1.113</ecNumber>
    </recommendedName>
    <alternativeName>
        <fullName>Class I alpha-mannosidase 1B</fullName>
    </alternativeName>
    <alternativeName>
        <fullName>Man(9)-alpha-mannosidase 1B</fullName>
    </alternativeName>
</protein>
<evidence type="ECO:0000250" key="1"/>
<evidence type="ECO:0000250" key="2">
    <source>
        <dbReference type="UniProtKB" id="P31723"/>
    </source>
</evidence>
<evidence type="ECO:0000250" key="3">
    <source>
        <dbReference type="UniProtKB" id="P32906"/>
    </source>
</evidence>
<evidence type="ECO:0000250" key="4">
    <source>
        <dbReference type="UniProtKB" id="Q2ULB2"/>
    </source>
</evidence>
<evidence type="ECO:0000255" key="5"/>
<evidence type="ECO:0000305" key="6"/>
<feature type="signal peptide" evidence="5">
    <location>
        <begin position="1"/>
        <end position="18"/>
    </location>
</feature>
<feature type="chain" id="PRO_0000394819" description="Probable mannosyl-oligosaccharide alpha-1,2-mannosidase 1B">
    <location>
        <begin position="19"/>
        <end position="493"/>
    </location>
</feature>
<feature type="active site" description="Proton donor" evidence="2">
    <location>
        <position position="367"/>
    </location>
</feature>
<feature type="glycosylation site" description="N-linked (GlcNAc...) asparagine" evidence="5">
    <location>
        <position position="87"/>
    </location>
</feature>
<feature type="glycosylation site" description="N-linked (GlcNAc...) asparagine" evidence="5">
    <location>
        <position position="174"/>
    </location>
</feature>
<feature type="glycosylation site" description="N-linked (GlcNAc...) asparagine" evidence="5">
    <location>
        <position position="489"/>
    </location>
</feature>
<feature type="disulfide bond" evidence="3">
    <location>
        <begin position="324"/>
        <end position="353"/>
    </location>
</feature>